<organism>
    <name type="scientific">Escherichia coli O139:H28 (strain E24377A / ETEC)</name>
    <dbReference type="NCBI Taxonomy" id="331111"/>
    <lineage>
        <taxon>Bacteria</taxon>
        <taxon>Pseudomonadati</taxon>
        <taxon>Pseudomonadota</taxon>
        <taxon>Gammaproteobacteria</taxon>
        <taxon>Enterobacterales</taxon>
        <taxon>Enterobacteriaceae</taxon>
        <taxon>Escherichia</taxon>
    </lineage>
</organism>
<gene>
    <name evidence="1" type="primary">asnA</name>
    <name type="ordered locus">EcE24377A_4260</name>
</gene>
<name>ASNA_ECO24</name>
<sequence length="330" mass="36691">MKTAYIAKQRQISFVKSHFSRQLEERLGLIEVQAPILSRVGDGTQDNLSGCEKAVQVKVKALPDAQFEVVHSLAKWKRQTLGQHDFSAGEGLYTHMKALRPDEERLSPLHSVYVDQWDWERVMGDGERQFSTLKSTVEAIWAGIKATEAAVSEEFGLAPFLPDQIHFVHSQELLSRYPDLDAKGRERAIAKDLGAVFLVGIGGKLSDGHRHDVRAPDYDDWSTPSELGHAGLNGDILVWNPVLEDAFELSSMGIRVDADTLKHQLALTGDEDRLQLEWHQALLRGEMPQTIGGGIGQSRLTMLLLQLPHIGQVQCGVWPAAVRENVPSLL</sequence>
<dbReference type="EC" id="6.3.1.1" evidence="1"/>
<dbReference type="EMBL" id="CP000800">
    <property type="protein sequence ID" value="ABV18255.1"/>
    <property type="molecule type" value="Genomic_DNA"/>
</dbReference>
<dbReference type="RefSeq" id="WP_000845133.1">
    <property type="nucleotide sequence ID" value="NC_009801.1"/>
</dbReference>
<dbReference type="SMR" id="A7ZTV5"/>
<dbReference type="GeneID" id="75205462"/>
<dbReference type="KEGG" id="ecw:EcE24377A_4260"/>
<dbReference type="HOGENOM" id="CLU_071543_0_0_6"/>
<dbReference type="UniPathway" id="UPA00134">
    <property type="reaction ID" value="UER00194"/>
</dbReference>
<dbReference type="Proteomes" id="UP000001122">
    <property type="component" value="Chromosome"/>
</dbReference>
<dbReference type="GO" id="GO:0005829">
    <property type="term" value="C:cytosol"/>
    <property type="evidence" value="ECO:0007669"/>
    <property type="project" value="TreeGrafter"/>
</dbReference>
<dbReference type="GO" id="GO:0004071">
    <property type="term" value="F:aspartate-ammonia ligase activity"/>
    <property type="evidence" value="ECO:0007669"/>
    <property type="project" value="UniProtKB-UniRule"/>
</dbReference>
<dbReference type="GO" id="GO:0005524">
    <property type="term" value="F:ATP binding"/>
    <property type="evidence" value="ECO:0007669"/>
    <property type="project" value="UniProtKB-UniRule"/>
</dbReference>
<dbReference type="GO" id="GO:0070981">
    <property type="term" value="P:L-asparagine biosynthetic process"/>
    <property type="evidence" value="ECO:0007669"/>
    <property type="project" value="UniProtKB-UniRule"/>
</dbReference>
<dbReference type="CDD" id="cd00645">
    <property type="entry name" value="AsnA"/>
    <property type="match status" value="1"/>
</dbReference>
<dbReference type="FunFam" id="3.30.930.10:FF:000025">
    <property type="entry name" value="Aspartate--ammonia ligase"/>
    <property type="match status" value="1"/>
</dbReference>
<dbReference type="Gene3D" id="3.30.930.10">
    <property type="entry name" value="Bira Bifunctional Protein, Domain 2"/>
    <property type="match status" value="1"/>
</dbReference>
<dbReference type="HAMAP" id="MF_00555">
    <property type="entry name" value="AsnA"/>
    <property type="match status" value="1"/>
</dbReference>
<dbReference type="InterPro" id="IPR006195">
    <property type="entry name" value="aa-tRNA-synth_II"/>
</dbReference>
<dbReference type="InterPro" id="IPR045864">
    <property type="entry name" value="aa-tRNA-synth_II/BPL/LPL"/>
</dbReference>
<dbReference type="InterPro" id="IPR004618">
    <property type="entry name" value="AsnA"/>
</dbReference>
<dbReference type="NCBIfam" id="TIGR00669">
    <property type="entry name" value="asnA"/>
    <property type="match status" value="1"/>
</dbReference>
<dbReference type="PANTHER" id="PTHR30073">
    <property type="entry name" value="ASPARTATE--AMMONIA LIGASE"/>
    <property type="match status" value="1"/>
</dbReference>
<dbReference type="PANTHER" id="PTHR30073:SF5">
    <property type="entry name" value="ASPARTATE--AMMONIA LIGASE"/>
    <property type="match status" value="1"/>
</dbReference>
<dbReference type="Pfam" id="PF03590">
    <property type="entry name" value="AsnA"/>
    <property type="match status" value="1"/>
</dbReference>
<dbReference type="PIRSF" id="PIRSF001555">
    <property type="entry name" value="Asp_ammon_ligase"/>
    <property type="match status" value="1"/>
</dbReference>
<dbReference type="SUPFAM" id="SSF55681">
    <property type="entry name" value="Class II aaRS and biotin synthetases"/>
    <property type="match status" value="1"/>
</dbReference>
<dbReference type="PROSITE" id="PS50862">
    <property type="entry name" value="AA_TRNA_LIGASE_II"/>
    <property type="match status" value="1"/>
</dbReference>
<evidence type="ECO:0000255" key="1">
    <source>
        <dbReference type="HAMAP-Rule" id="MF_00555"/>
    </source>
</evidence>
<protein>
    <recommendedName>
        <fullName evidence="1">Aspartate--ammonia ligase</fullName>
        <ecNumber evidence="1">6.3.1.1</ecNumber>
    </recommendedName>
    <alternativeName>
        <fullName evidence="1">Asparagine synthetase A</fullName>
    </alternativeName>
</protein>
<comment type="catalytic activity">
    <reaction evidence="1">
        <text>L-aspartate + NH4(+) + ATP = L-asparagine + AMP + diphosphate + H(+)</text>
        <dbReference type="Rhea" id="RHEA:11372"/>
        <dbReference type="ChEBI" id="CHEBI:15378"/>
        <dbReference type="ChEBI" id="CHEBI:28938"/>
        <dbReference type="ChEBI" id="CHEBI:29991"/>
        <dbReference type="ChEBI" id="CHEBI:30616"/>
        <dbReference type="ChEBI" id="CHEBI:33019"/>
        <dbReference type="ChEBI" id="CHEBI:58048"/>
        <dbReference type="ChEBI" id="CHEBI:456215"/>
        <dbReference type="EC" id="6.3.1.1"/>
    </reaction>
</comment>
<comment type="pathway">
    <text evidence="1">Amino-acid biosynthesis; L-asparagine biosynthesis; L-asparagine from L-aspartate (ammonia route): step 1/1.</text>
</comment>
<comment type="subcellular location">
    <subcellularLocation>
        <location evidence="1">Cytoplasm</location>
    </subcellularLocation>
</comment>
<comment type="similarity">
    <text evidence="1">Belongs to the class-II aminoacyl-tRNA synthetase family. AsnA subfamily.</text>
</comment>
<accession>A7ZTV5</accession>
<reference key="1">
    <citation type="journal article" date="2008" name="J. Bacteriol.">
        <title>The pangenome structure of Escherichia coli: comparative genomic analysis of E. coli commensal and pathogenic isolates.</title>
        <authorList>
            <person name="Rasko D.A."/>
            <person name="Rosovitz M.J."/>
            <person name="Myers G.S.A."/>
            <person name="Mongodin E.F."/>
            <person name="Fricke W.F."/>
            <person name="Gajer P."/>
            <person name="Crabtree J."/>
            <person name="Sebaihia M."/>
            <person name="Thomson N.R."/>
            <person name="Chaudhuri R."/>
            <person name="Henderson I.R."/>
            <person name="Sperandio V."/>
            <person name="Ravel J."/>
        </authorList>
    </citation>
    <scope>NUCLEOTIDE SEQUENCE [LARGE SCALE GENOMIC DNA]</scope>
    <source>
        <strain>E24377A / ETEC</strain>
    </source>
</reference>
<proteinExistence type="inferred from homology"/>
<keyword id="KW-0028">Amino-acid biosynthesis</keyword>
<keyword id="KW-0061">Asparagine biosynthesis</keyword>
<keyword id="KW-0067">ATP-binding</keyword>
<keyword id="KW-0963">Cytoplasm</keyword>
<keyword id="KW-0436">Ligase</keyword>
<keyword id="KW-0547">Nucleotide-binding</keyword>
<keyword id="KW-1185">Reference proteome</keyword>
<feature type="chain" id="PRO_1000061103" description="Aspartate--ammonia ligase">
    <location>
        <begin position="1"/>
        <end position="330"/>
    </location>
</feature>